<gene>
    <name type="primary">cry1Ib</name>
    <name type="synonym">cryII(b)</name>
    <name type="synonym">cryV</name>
    <name type="synonym">cryV465</name>
</gene>
<proteinExistence type="evidence at transcript level"/>
<comment type="function">
    <text>Promotes colloidosmotic lysis by binding to the midgut epithelial cells of certain coleopteran and lepidopteran species. Active on Plutella xylostella but not on Bombyx mori.</text>
</comment>
<comment type="developmental stage">
    <text>The crystal protein is produced during sporulation and is accumulated both as an inclusion and as part of the spore coat.</text>
</comment>
<comment type="miscellaneous">
    <text>Toxic segment of the protein is located in the N-terminus.</text>
</comment>
<comment type="similarity">
    <text evidence="1">Belongs to the delta endotoxin family.</text>
</comment>
<organism>
    <name type="scientific">Bacillus thuringiensis subsp. entomocidus</name>
    <dbReference type="NCBI Taxonomy" id="1436"/>
    <lineage>
        <taxon>Bacteria</taxon>
        <taxon>Bacillati</taxon>
        <taxon>Bacillota</taxon>
        <taxon>Bacilli</taxon>
        <taxon>Bacillales</taxon>
        <taxon>Bacillaceae</taxon>
        <taxon>Bacillus</taxon>
        <taxon>Bacillus cereus group</taxon>
    </lineage>
</organism>
<keyword id="KW-0749">Sporulation</keyword>
<keyword id="KW-0800">Toxin</keyword>
<keyword id="KW-0843">Virulence</keyword>
<reference key="1">
    <citation type="journal article" date="1995" name="Appl. Environ. Microbiol.">
        <title>Distribution of cryV-type insecticidal protein genes in Bacillus thuringiensis and cloning of cryV-type genes from Bacillus thuringiensis subsp. kurstaki and Bacillus thuringiensis subsp. entomocidus.</title>
        <authorList>
            <person name="Shin B.-S."/>
            <person name="Park S.-H."/>
            <person name="Choi S.-K."/>
            <person name="Koo B.T."/>
            <person name="Lee S.T."/>
            <person name="Kim J.I."/>
        </authorList>
    </citation>
    <scope>NUCLEOTIDE SEQUENCE [GENOMIC DNA]</scope>
    <source>
        <strain>BP465</strain>
    </source>
</reference>
<accession>Q45709</accession>
<feature type="chain" id="PRO_0000174049" description="Pesticidal crystal protein Cry1Ib">
    <location>
        <begin position="1"/>
        <end position="719"/>
    </location>
</feature>
<dbReference type="EMBL" id="U07642">
    <property type="protein sequence ID" value="AAA82114.1"/>
    <property type="molecule type" value="Genomic_DNA"/>
</dbReference>
<dbReference type="PIR" id="I40590">
    <property type="entry name" value="I40590"/>
</dbReference>
<dbReference type="SMR" id="Q45709"/>
<dbReference type="GO" id="GO:0005102">
    <property type="term" value="F:signaling receptor binding"/>
    <property type="evidence" value="ECO:0007669"/>
    <property type="project" value="InterPro"/>
</dbReference>
<dbReference type="GO" id="GO:0090729">
    <property type="term" value="F:toxin activity"/>
    <property type="evidence" value="ECO:0007669"/>
    <property type="project" value="UniProtKB-KW"/>
</dbReference>
<dbReference type="GO" id="GO:0030435">
    <property type="term" value="P:sporulation resulting in formation of a cellular spore"/>
    <property type="evidence" value="ECO:0007669"/>
    <property type="project" value="UniProtKB-KW"/>
</dbReference>
<dbReference type="GO" id="GO:0001907">
    <property type="term" value="P:symbiont-mediated killing of host cell"/>
    <property type="evidence" value="ECO:0007669"/>
    <property type="project" value="InterPro"/>
</dbReference>
<dbReference type="CDD" id="cd04085">
    <property type="entry name" value="delta_endotoxin_C"/>
    <property type="match status" value="1"/>
</dbReference>
<dbReference type="Gene3D" id="2.60.120.260">
    <property type="entry name" value="Galactose-binding domain-like"/>
    <property type="match status" value="1"/>
</dbReference>
<dbReference type="Gene3D" id="2.100.10.10">
    <property type="entry name" value="Pesticidal crystal protein, central domain"/>
    <property type="match status" value="1"/>
</dbReference>
<dbReference type="Gene3D" id="1.20.190.10">
    <property type="entry name" value="Pesticidal crystal protein, N-terminal domain"/>
    <property type="match status" value="1"/>
</dbReference>
<dbReference type="InterPro" id="IPR008979">
    <property type="entry name" value="Galactose-bd-like_sf"/>
</dbReference>
<dbReference type="InterPro" id="IPR038979">
    <property type="entry name" value="Pest_crys"/>
</dbReference>
<dbReference type="InterPro" id="IPR005638">
    <property type="entry name" value="Pest_crys_dom-III"/>
</dbReference>
<dbReference type="InterPro" id="IPR005639">
    <property type="entry name" value="Pest_crys_dom_I"/>
</dbReference>
<dbReference type="InterPro" id="IPR036716">
    <property type="entry name" value="Pest_crys_N_sf"/>
</dbReference>
<dbReference type="InterPro" id="IPR036399">
    <property type="entry name" value="Pest_cryst_cen_dom_sf"/>
</dbReference>
<dbReference type="InterPro" id="IPR001178">
    <property type="entry name" value="Pest_cryst_dom_II"/>
</dbReference>
<dbReference type="PANTHER" id="PTHR37003">
    <property type="entry name" value="ENDOTOXIN_N DOMAIN-CONTAINING PROTEIN-RELATED"/>
    <property type="match status" value="1"/>
</dbReference>
<dbReference type="PANTHER" id="PTHR37003:SF2">
    <property type="entry name" value="PESTICIDAL CRYSTAL PROTEIN N-TERMINAL DOMAIN-CONTAINING PROTEIN"/>
    <property type="match status" value="1"/>
</dbReference>
<dbReference type="Pfam" id="PF03944">
    <property type="entry name" value="Endotoxin_C"/>
    <property type="match status" value="1"/>
</dbReference>
<dbReference type="Pfam" id="PF00555">
    <property type="entry name" value="Endotoxin_M"/>
    <property type="match status" value="1"/>
</dbReference>
<dbReference type="Pfam" id="PF03945">
    <property type="entry name" value="Endotoxin_N"/>
    <property type="match status" value="1"/>
</dbReference>
<dbReference type="SUPFAM" id="SSF51096">
    <property type="entry name" value="delta-Endotoxin (insectocide), middle domain"/>
    <property type="match status" value="1"/>
</dbReference>
<dbReference type="SUPFAM" id="SSF56849">
    <property type="entry name" value="delta-Endotoxin (insectocide), N-terminal domain"/>
    <property type="match status" value="1"/>
</dbReference>
<dbReference type="SUPFAM" id="SSF49785">
    <property type="entry name" value="Galactose-binding domain-like"/>
    <property type="match status" value="1"/>
</dbReference>
<protein>
    <recommendedName>
        <fullName>Pesticidal crystal protein Cry1Ib</fullName>
    </recommendedName>
    <alternativeName>
        <fullName>81 kDa crystal protein</fullName>
    </alternativeName>
    <alternativeName>
        <fullName>Crystaline entomocidal protoxin</fullName>
    </alternativeName>
    <alternativeName>
        <fullName>Insecticidal delta-endotoxin CryII(b)</fullName>
    </alternativeName>
</protein>
<sequence>MKLKNPDKHQSLSSNAKVDKIATDSLKNETDIELKNMNNEDYLRMSEHESIDPFVSASTIQTGIGIAGKILGTLGVPFAGQIASLYSFILGELWPKGKSQWEIFMEHVEEIINQKILTYARNKALSDLRGLGDALAVYHESLESWVENRNNTRARSVVKNQYIALELMFVQKLPSFAVSGEEVPLLPIYAQAANLHLLLLRDASIFGKEWGLSASEISTFYNRQVERTRDYSDHCIKWYNTGLNNLRGTNAKSWVRYNQFRKDMTLMVLDLVALFPSYDTLVYPIKTTSQLTREVYTDAIGTVHPNQAFASTTWYNNNAPSFSAIEAAVIRSPHLLDFLEKVTIYSLLSRWSNTQYMNMWGGHRLESRPIGGALNTSTQGSTNTSINPVTLQFTSRDVYRTESLAGLNLFLTQPVNGVPRVDFHWKFPTLPIASDNFYYLGYAGVGTQLQDSENELPPETTGQPNYESYSHRLSHIGLISASHVKALVYSWTHRSADRTNTIEPNSITQIPLVKAFNLSSGAAVVRGPGFTGGDILRRTNTGTFGDIRVNINPPFAQRYRVRIRYASTTDLQFHTSINGKAINQGNFSATMNRGEDLDYKTFRTIGFTTPFSFSDVQSTFTIGAWNFSSGNEVYIDRIEFVPVEVTYEAEYDFEKAQEKVTALFTSTNPRGLKTDVKDYHIDQVSNLVESLSDEFYLDEKRELFEIVKYAKQIHIERNM</sequence>
<evidence type="ECO:0000305" key="1"/>
<name>CR1IB_BACTE</name>